<dbReference type="EC" id="2.4.1.-" evidence="1"/>
<dbReference type="EMBL" id="LCWF01000101">
    <property type="protein sequence ID" value="KKY20074.1"/>
    <property type="molecule type" value="Genomic_DNA"/>
</dbReference>
<dbReference type="SMR" id="A0A0G2EC47"/>
<dbReference type="OrthoDB" id="5835829at2759"/>
<dbReference type="Proteomes" id="UP000053317">
    <property type="component" value="Unassembled WGS sequence"/>
</dbReference>
<dbReference type="GO" id="GO:0016758">
    <property type="term" value="F:hexosyltransferase activity"/>
    <property type="evidence" value="ECO:0007669"/>
    <property type="project" value="UniProtKB-ARBA"/>
</dbReference>
<dbReference type="GO" id="GO:0008194">
    <property type="term" value="F:UDP-glycosyltransferase activity"/>
    <property type="evidence" value="ECO:0007669"/>
    <property type="project" value="InterPro"/>
</dbReference>
<dbReference type="CDD" id="cd03784">
    <property type="entry name" value="GT1_Gtf-like"/>
    <property type="match status" value="1"/>
</dbReference>
<dbReference type="FunFam" id="3.40.50.2000:FF:000072">
    <property type="entry name" value="Glycosyl transferase"/>
    <property type="match status" value="1"/>
</dbReference>
<dbReference type="Gene3D" id="3.40.50.2000">
    <property type="entry name" value="Glycogen Phosphorylase B"/>
    <property type="match status" value="2"/>
</dbReference>
<dbReference type="InterPro" id="IPR010610">
    <property type="entry name" value="EryCIII-like_C"/>
</dbReference>
<dbReference type="InterPro" id="IPR050426">
    <property type="entry name" value="Glycosyltransferase_28"/>
</dbReference>
<dbReference type="InterPro" id="IPR002213">
    <property type="entry name" value="UDP_glucos_trans"/>
</dbReference>
<dbReference type="PANTHER" id="PTHR48050">
    <property type="entry name" value="STEROL 3-BETA-GLUCOSYLTRANSFERASE"/>
    <property type="match status" value="1"/>
</dbReference>
<dbReference type="PANTHER" id="PTHR48050:SF13">
    <property type="entry name" value="STEROL 3-BETA-GLUCOSYLTRANSFERASE UGT80A2"/>
    <property type="match status" value="1"/>
</dbReference>
<dbReference type="Pfam" id="PF06722">
    <property type="entry name" value="EryCIII-like_C"/>
    <property type="match status" value="1"/>
</dbReference>
<dbReference type="SUPFAM" id="SSF53756">
    <property type="entry name" value="UDP-Glycosyltransferase/glycogen phosphorylase"/>
    <property type="match status" value="1"/>
</dbReference>
<accession>A0A0G2EC47</accession>
<feature type="chain" id="PRO_0000461511" description="UDP-glycosyltransferase 2">
    <location>
        <begin position="1"/>
        <end position="455"/>
    </location>
</feature>
<reference key="1">
    <citation type="journal article" date="2015" name="BMC Genomics">
        <title>Distinctive expansion of gene families associated with plant cell wall degradation, secondary metabolism, and nutrient uptake in the genomes of grapevine trunk pathogens.</title>
        <authorList>
            <person name="Morales-Cruz A."/>
            <person name="Amrine K.C."/>
            <person name="Blanco-Ulate B."/>
            <person name="Lawrence D.P."/>
            <person name="Travadon R."/>
            <person name="Rolshausen P.E."/>
            <person name="Baumgartner K."/>
            <person name="Cantu D."/>
        </authorList>
    </citation>
    <scope>NUCLEOTIDE SEQUENCE [LARGE SCALE GENOMIC DNA]</scope>
    <source>
        <strain>UCRPC4</strain>
    </source>
</reference>
<reference key="2">
    <citation type="journal article" date="2024" name="J. Am. Chem. Soc.">
        <title>Targeted discovery of glycosylated natural products by tailoring enzyme-guided genome mining and MS-based metabolome analysis.</title>
        <authorList>
            <person name="Chen D."/>
            <person name="Song Z."/>
            <person name="Han J."/>
            <person name="Liu J."/>
            <person name="Liu H."/>
            <person name="Dai J."/>
        </authorList>
    </citation>
    <scope>FUNCTION</scope>
    <scope>CATALYTIC ACTIVITY</scope>
    <scope>PATHWAY</scope>
    <scope>BIOTECHNOLOGY</scope>
</reference>
<protein>
    <recommendedName>
        <fullName evidence="2">UDP-glycosyltransferase 2</fullName>
        <ecNumber evidence="1">2.4.1.-</ecNumber>
    </recommendedName>
    <alternativeName>
        <fullName evidence="2">O-galactosyltransferase 2</fullName>
        <shortName evidence="2">OGT2</shortName>
    </alternativeName>
</protein>
<organism>
    <name type="scientific">Phaeomoniella chlamydospora</name>
    <name type="common">Phaeoacremonium chlamydosporum</name>
    <dbReference type="NCBI Taxonomy" id="158046"/>
    <lineage>
        <taxon>Eukaryota</taxon>
        <taxon>Fungi</taxon>
        <taxon>Dikarya</taxon>
        <taxon>Ascomycota</taxon>
        <taxon>Pezizomycotina</taxon>
        <taxon>Eurotiomycetes</taxon>
        <taxon>Chaetothyriomycetidae</taxon>
        <taxon>Phaeomoniellales</taxon>
        <taxon>Phaeomoniellaceae</taxon>
        <taxon>Phaeomoniella</taxon>
    </lineage>
</organism>
<evidence type="ECO:0000269" key="1">
    <source>
    </source>
</evidence>
<evidence type="ECO:0000303" key="2">
    <source>
    </source>
</evidence>
<evidence type="ECO:0000305" key="3"/>
<proteinExistence type="evidence at protein level"/>
<comment type="function">
    <text evidence="1">Catalyzes the second glycosylation step during phaeomoniecin D biosynthesis, the further O-galactosylation of exophillic acid (produced by the O-glycosyltransferase OGT1) to yield the 4-O-beta-D-galactoside phaeomoniecin D.</text>
</comment>
<comment type="catalytic activity">
    <reaction evidence="1">
        <text>exophillate + UDP-alpha-D-galactose = phaeomoniecin D + UDP + H(+)</text>
        <dbReference type="Rhea" id="RHEA:82203"/>
        <dbReference type="ChEBI" id="CHEBI:15378"/>
        <dbReference type="ChEBI" id="CHEBI:58223"/>
        <dbReference type="ChEBI" id="CHEBI:66914"/>
        <dbReference type="ChEBI" id="CHEBI:232029"/>
        <dbReference type="ChEBI" id="CHEBI:232032"/>
    </reaction>
    <physiologicalReaction direction="left-to-right" evidence="1">
        <dbReference type="Rhea" id="RHEA:82204"/>
    </physiologicalReaction>
</comment>
<comment type="pathway">
    <text evidence="1">Secondary metabolite biosynthesis.</text>
</comment>
<comment type="biotechnology">
    <text evidence="1">Phaeomoniecin D was found to show anti-HIV activity, antibacterial activity against methicillin-resistant Staphylococcus aureus (MRSA), alpha-glucosidase inhibitory activity, as well as significant protein tyrosine phosphatase 1B (PTP1B) inhibitory activity and thus is a promising candidate for drug discovery projects.</text>
</comment>
<comment type="similarity">
    <text evidence="3">Belongs to the UDP-glycosyltransferase family.</text>
</comment>
<sequence>MIASTAKPHVILAAVPIYGHVEKLRIIGCDLQKRGYAVTFLTGTVWREFVEHAGLPFFALKANADFDGRDFAKAFPMWDKLPPGPPRFGYLRHSLIDQMPAQHESVQAVLEDVAARGLKAVVIQDTAFFGVNPIQMGAPGITPAGTITVGITPLPLFSIDTAPFGSGLPPDSSPEGRARNIAANEKIKAVAQISQAHFTQTMKSLGVKTVPDDLLNSAVTTPDRFLQLCIESFEYPRSDAPSNLRYIGALAPGDENKSQHPLPDWWDLVIKHDKPLVVVSQGTLSNHNYKDLIIPTLEALKDLDIRVVTTLVRTDSLDGDLQDFQIPSNVLVAKFIPFEELFKHADLVVNNGGYGTVQTAFGHGVPMVLAGQTEDKTETNARAAWSGAAINLACQTATAEQVRDAVEKVLNDPKYKNRAMELKKEYEACDALQSIADNIDELAAAAAAEEEDENE</sequence>
<keyword id="KW-0328">Glycosyltransferase</keyword>
<keyword id="KW-1185">Reference proteome</keyword>
<keyword id="KW-0808">Transferase</keyword>
<gene>
    <name type="ORF">UCRPC4_g04263</name>
</gene>
<name>OGT2_PHACM</name>